<reference key="1">
    <citation type="journal article" date="2006" name="Lancet">
        <title>Complete genome sequence of USA300, an epidemic clone of community-acquired meticillin-resistant Staphylococcus aureus.</title>
        <authorList>
            <person name="Diep B.A."/>
            <person name="Gill S.R."/>
            <person name="Chang R.F."/>
            <person name="Phan T.H."/>
            <person name="Chen J.H."/>
            <person name="Davidson M.G."/>
            <person name="Lin F."/>
            <person name="Lin J."/>
            <person name="Carleton H.A."/>
            <person name="Mongodin E.F."/>
            <person name="Sensabaugh G.F."/>
            <person name="Perdreau-Remington F."/>
        </authorList>
    </citation>
    <scope>NUCLEOTIDE SEQUENCE [LARGE SCALE GENOMIC DNA]</scope>
    <source>
        <strain>USA300</strain>
    </source>
</reference>
<accession>Q2FJA3</accession>
<feature type="initiator methionine" description="Removed" evidence="1">
    <location>
        <position position="1"/>
    </location>
</feature>
<feature type="chain" id="PRO_0000258219" description="Large ribosomal subunit protein uL11">
    <location>
        <begin position="2"/>
        <end position="140"/>
    </location>
</feature>
<protein>
    <recommendedName>
        <fullName evidence="2">Large ribosomal subunit protein uL11</fullName>
    </recommendedName>
    <alternativeName>
        <fullName evidence="3">50S ribosomal protein L11</fullName>
    </alternativeName>
</protein>
<sequence>MAKKVDKVVKLQIPAGKANPAPPVGPALGQAGVNIMGFCKEFNARTQDQAGLIIPVEISVYEDRSFTFITKTPPAPVLLKKAAGIEKGSGEPNKTKVATVTKDQVREIANSKMQDLNAADEEAAMRIIEGTARSMGIVVE</sequence>
<dbReference type="EMBL" id="CP000255">
    <property type="protein sequence ID" value="ABD21621.1"/>
    <property type="molecule type" value="Genomic_DNA"/>
</dbReference>
<dbReference type="RefSeq" id="WP_001085792.1">
    <property type="nucleotide sequence ID" value="NZ_CP027476.1"/>
</dbReference>
<dbReference type="SMR" id="Q2FJA3"/>
<dbReference type="GeneID" id="98344871"/>
<dbReference type="KEGG" id="saa:SAUSA300_0522"/>
<dbReference type="HOGENOM" id="CLU_074237_2_1_9"/>
<dbReference type="OMA" id="CKQFNAK"/>
<dbReference type="Proteomes" id="UP000001939">
    <property type="component" value="Chromosome"/>
</dbReference>
<dbReference type="GO" id="GO:0022625">
    <property type="term" value="C:cytosolic large ribosomal subunit"/>
    <property type="evidence" value="ECO:0007669"/>
    <property type="project" value="TreeGrafter"/>
</dbReference>
<dbReference type="GO" id="GO:0070180">
    <property type="term" value="F:large ribosomal subunit rRNA binding"/>
    <property type="evidence" value="ECO:0007669"/>
    <property type="project" value="UniProtKB-UniRule"/>
</dbReference>
<dbReference type="GO" id="GO:0003735">
    <property type="term" value="F:structural constituent of ribosome"/>
    <property type="evidence" value="ECO:0007669"/>
    <property type="project" value="InterPro"/>
</dbReference>
<dbReference type="GO" id="GO:0006412">
    <property type="term" value="P:translation"/>
    <property type="evidence" value="ECO:0007669"/>
    <property type="project" value="UniProtKB-UniRule"/>
</dbReference>
<dbReference type="CDD" id="cd00349">
    <property type="entry name" value="Ribosomal_L11"/>
    <property type="match status" value="1"/>
</dbReference>
<dbReference type="FunFam" id="1.10.10.250:FF:000001">
    <property type="entry name" value="50S ribosomal protein L11"/>
    <property type="match status" value="1"/>
</dbReference>
<dbReference type="FunFam" id="3.30.1550.10:FF:000001">
    <property type="entry name" value="50S ribosomal protein L11"/>
    <property type="match status" value="1"/>
</dbReference>
<dbReference type="Gene3D" id="1.10.10.250">
    <property type="entry name" value="Ribosomal protein L11, C-terminal domain"/>
    <property type="match status" value="1"/>
</dbReference>
<dbReference type="Gene3D" id="3.30.1550.10">
    <property type="entry name" value="Ribosomal protein L11/L12, N-terminal domain"/>
    <property type="match status" value="1"/>
</dbReference>
<dbReference type="HAMAP" id="MF_00736">
    <property type="entry name" value="Ribosomal_uL11"/>
    <property type="match status" value="1"/>
</dbReference>
<dbReference type="InterPro" id="IPR000911">
    <property type="entry name" value="Ribosomal_uL11"/>
</dbReference>
<dbReference type="InterPro" id="IPR006519">
    <property type="entry name" value="Ribosomal_uL11_bac-typ"/>
</dbReference>
<dbReference type="InterPro" id="IPR020783">
    <property type="entry name" value="Ribosomal_uL11_C"/>
</dbReference>
<dbReference type="InterPro" id="IPR036769">
    <property type="entry name" value="Ribosomal_uL11_C_sf"/>
</dbReference>
<dbReference type="InterPro" id="IPR020785">
    <property type="entry name" value="Ribosomal_uL11_CS"/>
</dbReference>
<dbReference type="InterPro" id="IPR020784">
    <property type="entry name" value="Ribosomal_uL11_N"/>
</dbReference>
<dbReference type="InterPro" id="IPR036796">
    <property type="entry name" value="Ribosomal_uL11_N_sf"/>
</dbReference>
<dbReference type="NCBIfam" id="TIGR01632">
    <property type="entry name" value="L11_bact"/>
    <property type="match status" value="1"/>
</dbReference>
<dbReference type="PANTHER" id="PTHR11661">
    <property type="entry name" value="60S RIBOSOMAL PROTEIN L12"/>
    <property type="match status" value="1"/>
</dbReference>
<dbReference type="PANTHER" id="PTHR11661:SF1">
    <property type="entry name" value="LARGE RIBOSOMAL SUBUNIT PROTEIN UL11M"/>
    <property type="match status" value="1"/>
</dbReference>
<dbReference type="Pfam" id="PF00298">
    <property type="entry name" value="Ribosomal_L11"/>
    <property type="match status" value="1"/>
</dbReference>
<dbReference type="Pfam" id="PF03946">
    <property type="entry name" value="Ribosomal_L11_N"/>
    <property type="match status" value="1"/>
</dbReference>
<dbReference type="SMART" id="SM00649">
    <property type="entry name" value="RL11"/>
    <property type="match status" value="1"/>
</dbReference>
<dbReference type="SUPFAM" id="SSF54747">
    <property type="entry name" value="Ribosomal L11/L12e N-terminal domain"/>
    <property type="match status" value="1"/>
</dbReference>
<dbReference type="SUPFAM" id="SSF46906">
    <property type="entry name" value="Ribosomal protein L11, C-terminal domain"/>
    <property type="match status" value="1"/>
</dbReference>
<dbReference type="PROSITE" id="PS00359">
    <property type="entry name" value="RIBOSOMAL_L11"/>
    <property type="match status" value="1"/>
</dbReference>
<gene>
    <name evidence="2" type="primary">rplK</name>
    <name type="ordered locus">SAUSA300_0522</name>
</gene>
<evidence type="ECO:0000250" key="1"/>
<evidence type="ECO:0000255" key="2">
    <source>
        <dbReference type="HAMAP-Rule" id="MF_00736"/>
    </source>
</evidence>
<evidence type="ECO:0000305" key="3"/>
<comment type="function">
    <text evidence="2">Forms part of the ribosomal stalk which helps the ribosome interact with GTP-bound translation factors.</text>
</comment>
<comment type="subunit">
    <text evidence="2">Part of the ribosomal stalk of the 50S ribosomal subunit. Interacts with L10 and the large rRNA to form the base of the stalk. L10 forms an elongated spine to which L12 dimers bind in a sequential fashion forming a multimeric L10(L12)X complex.</text>
</comment>
<comment type="PTM">
    <text evidence="2">One or more lysine residues are methylated.</text>
</comment>
<comment type="similarity">
    <text evidence="2">Belongs to the universal ribosomal protein uL11 family.</text>
</comment>
<name>RL11_STAA3</name>
<organism>
    <name type="scientific">Staphylococcus aureus (strain USA300)</name>
    <dbReference type="NCBI Taxonomy" id="367830"/>
    <lineage>
        <taxon>Bacteria</taxon>
        <taxon>Bacillati</taxon>
        <taxon>Bacillota</taxon>
        <taxon>Bacilli</taxon>
        <taxon>Bacillales</taxon>
        <taxon>Staphylococcaceae</taxon>
        <taxon>Staphylococcus</taxon>
    </lineage>
</organism>
<proteinExistence type="inferred from homology"/>
<keyword id="KW-0488">Methylation</keyword>
<keyword id="KW-0687">Ribonucleoprotein</keyword>
<keyword id="KW-0689">Ribosomal protein</keyword>
<keyword id="KW-0694">RNA-binding</keyword>
<keyword id="KW-0699">rRNA-binding</keyword>